<evidence type="ECO:0000250" key="1">
    <source>
        <dbReference type="UniProtKB" id="Q02201"/>
    </source>
</evidence>
<evidence type="ECO:0000256" key="2">
    <source>
        <dbReference type="SAM" id="MobiDB-lite"/>
    </source>
</evidence>
<evidence type="ECO:0000269" key="3">
    <source>
    </source>
</evidence>
<evidence type="ECO:0000269" key="4">
    <source>
    </source>
</evidence>
<evidence type="ECO:0000269" key="5">
    <source>
    </source>
</evidence>
<evidence type="ECO:0000269" key="6">
    <source>
    </source>
</evidence>
<evidence type="ECO:0000269" key="7">
    <source>
    </source>
</evidence>
<evidence type="ECO:0000269" key="8">
    <source>
    </source>
</evidence>
<evidence type="ECO:0000303" key="9">
    <source>
    </source>
</evidence>
<evidence type="ECO:0000305" key="10"/>
<evidence type="ECO:0000305" key="11">
    <source>
    </source>
</evidence>
<evidence type="ECO:0007744" key="12">
    <source>
    </source>
</evidence>
<proteinExistence type="evidence at protein level"/>
<comment type="function">
    <text evidence="4 7 8">ipid transport protein (LTP) involved in non-vesicular transfer of lipids between membranes. Functions in phosphoinositide-coupled directional transport of various lipids by carrying the lipid molecule in a hydrophobic pocket and transferring it between membranes through the cytosol. Involved in maintenance of intracellular sterol distribution and homeostasis (PubMed:15173322). Involved in lipid countertransport between the endoplasmic reticulum and the plasma membrane. Specifically exchanges phosphatidylserine with phosphatidylinositol 4-phosphate (PI4P), delivering phosphatidylserine to the PM in exchange for PI4P, which is delivered to the ER-localized PI4P phosphatase SAC1 for degradation. Thus, by maintaining a PI4P gradient at the ER/PM interface, SAC1 drives PS transport (PubMed:23934110, PubMed:26206936). Binds phosphatidylserine and PI4P in a mutually exclusive manner (PubMed:26206936).</text>
</comment>
<comment type="catalytic activity">
    <reaction evidence="7">
        <text>a 1,2-diacyl-sn-glycero-3-phospho-L-serine(in) = a 1,2-diacyl-sn-glycero-3-phospho-L-serine(out)</text>
        <dbReference type="Rhea" id="RHEA:38663"/>
        <dbReference type="ChEBI" id="CHEBI:57262"/>
    </reaction>
    <physiologicalReaction direction="left-to-right" evidence="7">
        <dbReference type="Rhea" id="RHEA:38664"/>
    </physiologicalReaction>
</comment>
<comment type="subunit">
    <text evidence="5">Interacts with the AAA ATPase VPS4; regulates OSH7 membrane association. VPS4 is required for membrane dissociation of OSH7.</text>
</comment>
<comment type="subcellular location">
    <subcellularLocation>
        <location evidence="5">Cytoplasm</location>
    </subcellularLocation>
    <subcellularLocation>
        <location evidence="6">Cell membrane</location>
    </subcellularLocation>
    <subcellularLocation>
        <location evidence="6 7">Endoplasmic reticulum membrane</location>
    </subcellularLocation>
    <text evidence="6 7">Localizes to the cortical endoplasmic reticulum at the endoplasmic reticulum-plasma membrane contact sites.</text>
</comment>
<comment type="domain">
    <text evidence="11">The OSBP-related domain (ORD) mediates binding of sterols and phospholipids. It displays an incomplete beta-barrel containing a central hydrophobic tunnel that can accommodate a single lipid molecule with a flexible lid covering the tunnel entrance. The ORD can bind two membranes simultaneously. It has at least two membrane-binding surfaces; one near the mouth of the lipid-binding pocket and a distal site that can bind a second membrane. These structural features correlate with the phosphatidylinositol 4-phosphate (PI(4)P)-coupled lipid transport optimized in closely apposed membranes, such as organelle contact sites. The lipid transfer cycle starts from the association of the LTP with a donor membrane, which accompanies conformational changes that uncover the ligand-binding pocket. The tunnel opening is generally mediated by displacement of the lid covering the binding pocket allowing uptake or release of a lipid molecule. The LTPs extract the lipid from the membrane by providing a hydrophobic environment as well as specific interaction. Dissociation from the donor membrane shifts the conformation to a closed form. Then, the LTPs loaded with a cargo lipid diffuse through the aqueous phase. Lid opening may be induced by the interaction of a hydrophobic side of the lid with the target membranes.</text>
</comment>
<comment type="miscellaneous">
    <text evidence="3">Present with 2350 molecules/cell in log phase SD medium.</text>
</comment>
<comment type="similarity">
    <text evidence="10">Belongs to the OSBP family.</text>
</comment>
<feature type="chain" id="PRO_0000100391" description="Oxysterol-binding protein homolog 7">
    <location>
        <begin position="1"/>
        <end position="437"/>
    </location>
</feature>
<feature type="region of interest" description="Disordered" evidence="2">
    <location>
        <begin position="23"/>
        <end position="42"/>
    </location>
</feature>
<feature type="region of interest" description="OSBP-related domain (ORD)" evidence="10">
    <location>
        <begin position="54"/>
        <end position="393"/>
    </location>
</feature>
<feature type="compositionally biased region" description="Polar residues" evidence="2">
    <location>
        <begin position="23"/>
        <end position="32"/>
    </location>
</feature>
<feature type="binding site" evidence="1">
    <location>
        <begin position="64"/>
        <end position="69"/>
    </location>
    <ligand>
        <name>a 1,2-diacyl-sn-glycero-3-phospho-(1D-myo-inositol 4-phosphate)</name>
        <dbReference type="ChEBI" id="CHEBI:58178"/>
    </ligand>
</feature>
<feature type="binding site" evidence="1">
    <location>
        <begin position="64"/>
        <end position="69"/>
    </location>
    <ligand>
        <name>a 1,2-diacyl-sn-glycero-3-phospho-L-serine</name>
        <dbReference type="ChEBI" id="CHEBI:57262"/>
    </ligand>
</feature>
<feature type="binding site" evidence="1">
    <location>
        <begin position="126"/>
        <end position="129"/>
    </location>
    <ligand>
        <name>a 1,2-diacyl-sn-glycero-3-phospho-(1D-myo-inositol 4-phosphate)</name>
        <dbReference type="ChEBI" id="CHEBI:58178"/>
    </ligand>
</feature>
<feature type="binding site" evidence="1">
    <location>
        <position position="129"/>
    </location>
    <ligand>
        <name>a 1,2-diacyl-sn-glycero-3-phospho-L-serine</name>
        <dbReference type="ChEBI" id="CHEBI:57262"/>
    </ligand>
</feature>
<feature type="binding site" evidence="1">
    <location>
        <begin position="157"/>
        <end position="158"/>
    </location>
    <ligand>
        <name>a 1,2-diacyl-sn-glycero-3-phospho-(1D-myo-inositol 4-phosphate)</name>
        <dbReference type="ChEBI" id="CHEBI:58178"/>
    </ligand>
</feature>
<feature type="binding site" evidence="1">
    <location>
        <position position="183"/>
    </location>
    <ligand>
        <name>a 1,2-diacyl-sn-glycero-3-phospho-L-serine</name>
        <dbReference type="ChEBI" id="CHEBI:57262"/>
    </ligand>
</feature>
<feature type="binding site" evidence="1">
    <location>
        <position position="351"/>
    </location>
    <ligand>
        <name>a 1,2-diacyl-sn-glycero-3-phospho-(1D-myo-inositol 4-phosphate)</name>
        <dbReference type="ChEBI" id="CHEBI:58178"/>
    </ligand>
</feature>
<feature type="binding site" evidence="1">
    <location>
        <position position="355"/>
    </location>
    <ligand>
        <name>a 1,2-diacyl-sn-glycero-3-phospho-(1D-myo-inositol 4-phosphate)</name>
        <dbReference type="ChEBI" id="CHEBI:58178"/>
    </ligand>
</feature>
<feature type="binding site" evidence="1">
    <location>
        <position position="359"/>
    </location>
    <ligand>
        <name>a 1,2-diacyl-sn-glycero-3-phospho-(1D-myo-inositol 4-phosphate)</name>
        <dbReference type="ChEBI" id="CHEBI:58178"/>
    </ligand>
</feature>
<feature type="cross-link" description="Glycyl lysine isopeptide (Lys-Gly) (interchain with G-Cter in ubiquitin)" evidence="12">
    <location>
        <position position="276"/>
    </location>
</feature>
<organism>
    <name type="scientific">Saccharomyces cerevisiae (strain ATCC 204508 / S288c)</name>
    <name type="common">Baker's yeast</name>
    <dbReference type="NCBI Taxonomy" id="559292"/>
    <lineage>
        <taxon>Eukaryota</taxon>
        <taxon>Fungi</taxon>
        <taxon>Dikarya</taxon>
        <taxon>Ascomycota</taxon>
        <taxon>Saccharomycotina</taxon>
        <taxon>Saccharomycetes</taxon>
        <taxon>Saccharomycetales</taxon>
        <taxon>Saccharomycetaceae</taxon>
        <taxon>Saccharomyces</taxon>
    </lineage>
</organism>
<keyword id="KW-1003">Cell membrane</keyword>
<keyword id="KW-0963">Cytoplasm</keyword>
<keyword id="KW-0256">Endoplasmic reticulum</keyword>
<keyword id="KW-1017">Isopeptide bond</keyword>
<keyword id="KW-0445">Lipid transport</keyword>
<keyword id="KW-0446">Lipid-binding</keyword>
<keyword id="KW-0472">Membrane</keyword>
<keyword id="KW-1185">Reference proteome</keyword>
<keyword id="KW-0813">Transport</keyword>
<keyword id="KW-0832">Ubl conjugation</keyword>
<gene>
    <name evidence="9" type="primary">OSH7</name>
    <name type="ordered locus">YHR001W</name>
</gene>
<name>OSH7_YEAST</name>
<sequence length="437" mass="49805">MALNKLKNIPSLTNSSHSSINGIASNAANSKPSGADTDDIDENDESGQSILLNIISQLKPGCDLSRITLPTFILEKKSMLERITNQLQFPDVLLEAHSNKDGLQRFVKVVAWYLAGWHIGPRAVKKPLNPILGEHFTAYWDLPNKQQAFYIAEQTSHHPPESAYFYMIPESNIRVDGVVVPKSKFLGNSSAAMMEGLTVLQFLDIKDANGKPEKYTLSQPNVYARGILFGKMRIELGDHMVIMGPKYQVDIEFKTKGFISGTYDAIEGTIKDYDGKEYYQISGKWNDIMYIKDLREKSSKKTVLFDTHQHFPLAPKVRPLEEQGEYESRRLWKKVTDALAVRDHEVATEEKFQIENRQRELAKKRAEDGVEFHSKLFRRAEPGEDLDYYIYKHIPEGTDKHEEQIRSILETAPILPGQTFTEKFSIPAYKKHGIQKN</sequence>
<dbReference type="EMBL" id="U10555">
    <property type="protein sequence ID" value="AAB68425.1"/>
    <property type="molecule type" value="Genomic_DNA"/>
</dbReference>
<dbReference type="EMBL" id="AY692903">
    <property type="protein sequence ID" value="AAT92922.1"/>
    <property type="molecule type" value="Genomic_DNA"/>
</dbReference>
<dbReference type="EMBL" id="BK006934">
    <property type="protein sequence ID" value="DAA06687.1"/>
    <property type="molecule type" value="Genomic_DNA"/>
</dbReference>
<dbReference type="PIR" id="S46796">
    <property type="entry name" value="S46796"/>
</dbReference>
<dbReference type="RefSeq" id="NP_011863.1">
    <property type="nucleotide sequence ID" value="NM_001179131.1"/>
</dbReference>
<dbReference type="SMR" id="P38755"/>
<dbReference type="BioGRID" id="36425">
    <property type="interactions" value="129"/>
</dbReference>
<dbReference type="DIP" id="DIP-6363N"/>
<dbReference type="FunCoup" id="P38755">
    <property type="interactions" value="1493"/>
</dbReference>
<dbReference type="IntAct" id="P38755">
    <property type="interactions" value="24"/>
</dbReference>
<dbReference type="MINT" id="P38755"/>
<dbReference type="STRING" id="4932.YHR001W"/>
<dbReference type="TCDB" id="2.D.1.1.4">
    <property type="family name" value="the pi4p/ps counter transporter (p/p-ct) family"/>
</dbReference>
<dbReference type="iPTMnet" id="P38755"/>
<dbReference type="PaxDb" id="4932-YHR001W"/>
<dbReference type="PeptideAtlas" id="P38755"/>
<dbReference type="EnsemblFungi" id="YHR001W_mRNA">
    <property type="protein sequence ID" value="YHR001W"/>
    <property type="gene ID" value="YHR001W"/>
</dbReference>
<dbReference type="GeneID" id="856389"/>
<dbReference type="KEGG" id="sce:YHR001W"/>
<dbReference type="AGR" id="SGD:S000001043"/>
<dbReference type="SGD" id="S000001043">
    <property type="gene designation" value="OSH7"/>
</dbReference>
<dbReference type="VEuPathDB" id="FungiDB:YHR001W"/>
<dbReference type="eggNOG" id="KOG2210">
    <property type="taxonomic scope" value="Eukaryota"/>
</dbReference>
<dbReference type="GeneTree" id="ENSGT00940000154690"/>
<dbReference type="HOGENOM" id="CLU_012334_4_2_1"/>
<dbReference type="InParanoid" id="P38755"/>
<dbReference type="OMA" id="VHTHKKD"/>
<dbReference type="OrthoDB" id="14833at2759"/>
<dbReference type="BioCyc" id="YEAST:YHR001W-MONOMER"/>
<dbReference type="Reactome" id="R-SCE-1482801">
    <property type="pathway name" value="Acyl chain remodelling of PS"/>
</dbReference>
<dbReference type="BioGRID-ORCS" id="856389">
    <property type="hits" value="0 hits in 10 CRISPR screens"/>
</dbReference>
<dbReference type="PRO" id="PR:P38755"/>
<dbReference type="Proteomes" id="UP000002311">
    <property type="component" value="Chromosome VIII"/>
</dbReference>
<dbReference type="RNAct" id="P38755">
    <property type="molecule type" value="protein"/>
</dbReference>
<dbReference type="GO" id="GO:0032541">
    <property type="term" value="C:cortical endoplasmic reticulum"/>
    <property type="evidence" value="ECO:0000314"/>
    <property type="project" value="UniProtKB"/>
</dbReference>
<dbReference type="GO" id="GO:0005737">
    <property type="term" value="C:cytoplasm"/>
    <property type="evidence" value="ECO:0000314"/>
    <property type="project" value="SGD"/>
</dbReference>
<dbReference type="GO" id="GO:0005829">
    <property type="term" value="C:cytosol"/>
    <property type="evidence" value="ECO:0007005"/>
    <property type="project" value="SGD"/>
</dbReference>
<dbReference type="GO" id="GO:0005789">
    <property type="term" value="C:endoplasmic reticulum membrane"/>
    <property type="evidence" value="ECO:0007669"/>
    <property type="project" value="UniProtKB-SubCell"/>
</dbReference>
<dbReference type="GO" id="GO:0016020">
    <property type="term" value="C:membrane"/>
    <property type="evidence" value="ECO:0000318"/>
    <property type="project" value="GO_Central"/>
</dbReference>
<dbReference type="GO" id="GO:0005886">
    <property type="term" value="C:plasma membrane"/>
    <property type="evidence" value="ECO:0007669"/>
    <property type="project" value="UniProtKB-SubCell"/>
</dbReference>
<dbReference type="GO" id="GO:0008289">
    <property type="term" value="F:lipid binding"/>
    <property type="evidence" value="ECO:0000314"/>
    <property type="project" value="SGD"/>
</dbReference>
<dbReference type="GO" id="GO:0070273">
    <property type="term" value="F:phosphatidylinositol-4-phosphate binding"/>
    <property type="evidence" value="ECO:0000314"/>
    <property type="project" value="UniProtKB"/>
</dbReference>
<dbReference type="GO" id="GO:0001786">
    <property type="term" value="F:phosphatidylserine binding"/>
    <property type="evidence" value="ECO:0000314"/>
    <property type="project" value="UniProtKB"/>
</dbReference>
<dbReference type="GO" id="GO:0005548">
    <property type="term" value="F:phospholipid transporter activity"/>
    <property type="evidence" value="ECO:0000314"/>
    <property type="project" value="UniProtKB"/>
</dbReference>
<dbReference type="GO" id="GO:0032934">
    <property type="term" value="F:sterol binding"/>
    <property type="evidence" value="ECO:0000318"/>
    <property type="project" value="GO_Central"/>
</dbReference>
<dbReference type="GO" id="GO:0120015">
    <property type="term" value="F:sterol transfer activity"/>
    <property type="evidence" value="ECO:0000314"/>
    <property type="project" value="SGD"/>
</dbReference>
<dbReference type="GO" id="GO:0006897">
    <property type="term" value="P:endocytosis"/>
    <property type="evidence" value="ECO:0000316"/>
    <property type="project" value="SGD"/>
</dbReference>
<dbReference type="GO" id="GO:0006887">
    <property type="term" value="P:exocytosis"/>
    <property type="evidence" value="ECO:0000316"/>
    <property type="project" value="SGD"/>
</dbReference>
<dbReference type="GO" id="GO:0045324">
    <property type="term" value="P:late endosome to vacuole transport"/>
    <property type="evidence" value="ECO:0000315"/>
    <property type="project" value="SGD"/>
</dbReference>
<dbReference type="GO" id="GO:0030011">
    <property type="term" value="P:maintenance of cell polarity"/>
    <property type="evidence" value="ECO:0000316"/>
    <property type="project" value="SGD"/>
</dbReference>
<dbReference type="GO" id="GO:0015914">
    <property type="term" value="P:phospholipid transport"/>
    <property type="evidence" value="ECO:0000314"/>
    <property type="project" value="UniProtKB"/>
</dbReference>
<dbReference type="GO" id="GO:0034727">
    <property type="term" value="P:piecemeal microautophagy of the nucleus"/>
    <property type="evidence" value="ECO:0000316"/>
    <property type="project" value="SGD"/>
</dbReference>
<dbReference type="GO" id="GO:0016125">
    <property type="term" value="P:sterol metabolic process"/>
    <property type="evidence" value="ECO:0000316"/>
    <property type="project" value="SGD"/>
</dbReference>
<dbReference type="GO" id="GO:0015918">
    <property type="term" value="P:sterol transport"/>
    <property type="evidence" value="ECO:0000316"/>
    <property type="project" value="SGD"/>
</dbReference>
<dbReference type="FunFam" id="3.30.70.3490:FF:000014">
    <property type="entry name" value="OSH7p Oxysterol-binding protein"/>
    <property type="match status" value="1"/>
</dbReference>
<dbReference type="FunFam" id="2.40.160.120:FF:000007">
    <property type="entry name" value="Oxysterol binding protein"/>
    <property type="match status" value="1"/>
</dbReference>
<dbReference type="FunFam" id="1.10.287.2720:FF:000001">
    <property type="entry name" value="Oxysterol-binding OBPalpha"/>
    <property type="match status" value="1"/>
</dbReference>
<dbReference type="Gene3D" id="1.10.287.2720">
    <property type="match status" value="1"/>
</dbReference>
<dbReference type="Gene3D" id="2.40.160.120">
    <property type="match status" value="1"/>
</dbReference>
<dbReference type="Gene3D" id="3.30.70.3490">
    <property type="match status" value="1"/>
</dbReference>
<dbReference type="InterPro" id="IPR037239">
    <property type="entry name" value="OSBP_sf"/>
</dbReference>
<dbReference type="InterPro" id="IPR000648">
    <property type="entry name" value="Oxysterol-bd"/>
</dbReference>
<dbReference type="InterPro" id="IPR018494">
    <property type="entry name" value="Oxysterol-bd_CS"/>
</dbReference>
<dbReference type="PANTHER" id="PTHR10972:SF102">
    <property type="entry name" value="OXYSTEROL-BINDING PROTEIN"/>
    <property type="match status" value="1"/>
</dbReference>
<dbReference type="PANTHER" id="PTHR10972">
    <property type="entry name" value="OXYSTEROL-BINDING PROTEIN-RELATED"/>
    <property type="match status" value="1"/>
</dbReference>
<dbReference type="Pfam" id="PF01237">
    <property type="entry name" value="Oxysterol_BP"/>
    <property type="match status" value="1"/>
</dbReference>
<dbReference type="SUPFAM" id="SSF144000">
    <property type="entry name" value="Oxysterol-binding protein-like"/>
    <property type="match status" value="1"/>
</dbReference>
<dbReference type="PROSITE" id="PS01013">
    <property type="entry name" value="OSBP"/>
    <property type="match status" value="1"/>
</dbReference>
<accession>P38755</accession>
<accession>D3DKR7</accession>
<reference key="1">
    <citation type="journal article" date="1994" name="Science">
        <title>Complete nucleotide sequence of Saccharomyces cerevisiae chromosome VIII.</title>
        <authorList>
            <person name="Johnston M."/>
            <person name="Andrews S."/>
            <person name="Brinkman R."/>
            <person name="Cooper J."/>
            <person name="Ding H."/>
            <person name="Dover J."/>
            <person name="Du Z."/>
            <person name="Favello A."/>
            <person name="Fulton L."/>
            <person name="Gattung S."/>
            <person name="Geisel C."/>
            <person name="Kirsten J."/>
            <person name="Kucaba T."/>
            <person name="Hillier L.W."/>
            <person name="Jier M."/>
            <person name="Johnston L."/>
            <person name="Langston Y."/>
            <person name="Latreille P."/>
            <person name="Louis E.J."/>
            <person name="Macri C."/>
            <person name="Mardis E."/>
            <person name="Menezes S."/>
            <person name="Mouser L."/>
            <person name="Nhan M."/>
            <person name="Rifkin L."/>
            <person name="Riles L."/>
            <person name="St Peter H."/>
            <person name="Trevaskis E."/>
            <person name="Vaughan K."/>
            <person name="Vignati D."/>
            <person name="Wilcox L."/>
            <person name="Wohldman P."/>
            <person name="Waterston R."/>
            <person name="Wilson R."/>
            <person name="Vaudin M."/>
        </authorList>
    </citation>
    <scope>NUCLEOTIDE SEQUENCE [LARGE SCALE GENOMIC DNA]</scope>
    <source>
        <strain>ATCC 204508 / S288c</strain>
    </source>
</reference>
<reference key="2">
    <citation type="journal article" date="2014" name="G3 (Bethesda)">
        <title>The reference genome sequence of Saccharomyces cerevisiae: Then and now.</title>
        <authorList>
            <person name="Engel S.R."/>
            <person name="Dietrich F.S."/>
            <person name="Fisk D.G."/>
            <person name="Binkley G."/>
            <person name="Balakrishnan R."/>
            <person name="Costanzo M.C."/>
            <person name="Dwight S.S."/>
            <person name="Hitz B.C."/>
            <person name="Karra K."/>
            <person name="Nash R.S."/>
            <person name="Weng S."/>
            <person name="Wong E.D."/>
            <person name="Lloyd P."/>
            <person name="Skrzypek M.S."/>
            <person name="Miyasato S.R."/>
            <person name="Simison M."/>
            <person name="Cherry J.M."/>
        </authorList>
    </citation>
    <scope>GENOME REANNOTATION</scope>
    <source>
        <strain>ATCC 204508 / S288c</strain>
    </source>
</reference>
<reference key="3">
    <citation type="journal article" date="2007" name="Genome Res.">
        <title>Approaching a complete repository of sequence-verified protein-encoding clones for Saccharomyces cerevisiae.</title>
        <authorList>
            <person name="Hu Y."/>
            <person name="Rolfs A."/>
            <person name="Bhullar B."/>
            <person name="Murthy T.V.S."/>
            <person name="Zhu C."/>
            <person name="Berger M.F."/>
            <person name="Camargo A.A."/>
            <person name="Kelley F."/>
            <person name="McCarron S."/>
            <person name="Jepson D."/>
            <person name="Richardson A."/>
            <person name="Raphael J."/>
            <person name="Moreira D."/>
            <person name="Taycher E."/>
            <person name="Zuo D."/>
            <person name="Mohr S."/>
            <person name="Kane M.F."/>
            <person name="Williamson J."/>
            <person name="Simpson A.J.G."/>
            <person name="Bulyk M.L."/>
            <person name="Harlow E."/>
            <person name="Marsischky G."/>
            <person name="Kolodner R.D."/>
            <person name="LaBaer J."/>
        </authorList>
    </citation>
    <scope>NUCLEOTIDE SEQUENCE [GENOMIC DNA]</scope>
    <source>
        <strain>ATCC 204508 / S288c</strain>
    </source>
</reference>
<reference key="4">
    <citation type="journal article" date="2001" name="Genetics">
        <title>Overlapping functions of the yeast oxysterol-binding protein homologues.</title>
        <authorList>
            <person name="Beh C.T."/>
            <person name="Cool L."/>
            <person name="Phillips J."/>
            <person name="Rine J."/>
        </authorList>
    </citation>
    <scope>GENETIC ANALYSIS</scope>
</reference>
<reference key="5">
    <citation type="journal article" date="2003" name="Nature">
        <title>Global analysis of protein expression in yeast.</title>
        <authorList>
            <person name="Ghaemmaghami S."/>
            <person name="Huh W.-K."/>
            <person name="Bower K."/>
            <person name="Howson R.W."/>
            <person name="Belle A."/>
            <person name="Dephoure N."/>
            <person name="O'Shea E.K."/>
            <person name="Weissman J.S."/>
        </authorList>
    </citation>
    <scope>LEVEL OF PROTEIN EXPRESSION [LARGE SCALE ANALYSIS]</scope>
</reference>
<reference key="6">
    <citation type="journal article" date="2004" name="J. Cell Sci.">
        <title>A role for yeast oxysterol-binding protein homologs in endocytosis and in the maintenance of intracellular sterol-lipid distribution.</title>
        <authorList>
            <person name="Beh C.T."/>
            <person name="Rine J."/>
        </authorList>
    </citation>
    <scope>FUNCTION</scope>
</reference>
<reference key="7">
    <citation type="journal article" date="2005" name="EMBO J.">
        <title>AAA ATPases regulate membrane association of yeast oxysterol binding proteins and sterol metabolism.</title>
        <authorList>
            <person name="Wang P."/>
            <person name="Zhang Y."/>
            <person name="Li H."/>
            <person name="Chieu H.K."/>
            <person name="Munn A.L."/>
            <person name="Yang H."/>
        </authorList>
    </citation>
    <scope>SUBCELLULAR LOCATION</scope>
    <scope>INTERACTION WITH VPS4</scope>
</reference>
<reference key="8">
    <citation type="journal article" date="2009" name="J. Cell Biol.">
        <title>Lipid-regulated sterol transfer between closely apposed membranes by oxysterol-binding protein homologues.</title>
        <authorList>
            <person name="Schulz T.A."/>
            <person name="Choi M.G."/>
            <person name="Raychaudhuri S."/>
            <person name="Mears J.A."/>
            <person name="Ghirlando R."/>
            <person name="Hinshaw J.E."/>
            <person name="Prinz W.A."/>
        </authorList>
    </citation>
    <scope>SUBCELLULAR LOCATION</scope>
</reference>
<reference key="9">
    <citation type="journal article" date="2012" name="Proteomics">
        <title>Sites of ubiquitin attachment in Saccharomyces cerevisiae.</title>
        <authorList>
            <person name="Starita L.M."/>
            <person name="Lo R.S."/>
            <person name="Eng J.K."/>
            <person name="von Haller P.D."/>
            <person name="Fields S."/>
        </authorList>
    </citation>
    <scope>UBIQUITINATION [LARGE SCALE ANALYSIS] AT LYS-276</scope>
    <scope>IDENTIFICATION BY MASS SPECTROMETRY [LARGE SCALE ANALYSIS]</scope>
</reference>
<reference key="10">
    <citation type="journal article" date="2013" name="Nature">
        <title>Interactome map uncovers phosphatidylserine transport by oxysterol-binding proteins.</title>
        <authorList>
            <person name="Maeda K."/>
            <person name="Anand K."/>
            <person name="Chiapparino A."/>
            <person name="Kumar A."/>
            <person name="Poletto M."/>
            <person name="Kaksonen M."/>
            <person name="Gavin A.C."/>
        </authorList>
    </citation>
    <scope>FUNCTION</scope>
    <scope>CATALYTIC ACTIVITY</scope>
    <scope>SUBCELLULAR LOCATION</scope>
</reference>
<reference key="11">
    <citation type="journal article" date="2015" name="Science">
        <title>Phosphatidylserine transport by ORP/Osh proteins is driven by phosphatidylinositol 4-phosphate.</title>
        <authorList>
            <person name="Moser von Filseck J."/>
            <person name="Copic A."/>
            <person name="Delfosse V."/>
            <person name="Vanni S."/>
            <person name="Jackson C.L."/>
            <person name="Bourguet W."/>
            <person name="Drin G."/>
        </authorList>
    </citation>
    <scope>FUNCTION</scope>
</reference>
<protein>
    <recommendedName>
        <fullName evidence="9">Oxysterol-binding protein homolog 7</fullName>
    </recommendedName>
    <alternativeName>
        <fullName>Oxysterol-binding protein-related protein 7</fullName>
        <shortName>ORP 7</shortName>
        <shortName>OSBP-related protein 7</shortName>
    </alternativeName>
</protein>